<proteinExistence type="inferred from homology"/>
<accession>A9NF62</accession>
<organism>
    <name type="scientific">Acholeplasma laidlawii (strain PG-8A)</name>
    <dbReference type="NCBI Taxonomy" id="441768"/>
    <lineage>
        <taxon>Bacteria</taxon>
        <taxon>Bacillati</taxon>
        <taxon>Mycoplasmatota</taxon>
        <taxon>Mollicutes</taxon>
        <taxon>Acholeplasmatales</taxon>
        <taxon>Acholeplasmataceae</taxon>
        <taxon>Acholeplasma</taxon>
    </lineage>
</organism>
<gene>
    <name evidence="1" type="primary">ruvB</name>
    <name type="ordered locus">ACL_0370</name>
</gene>
<feature type="chain" id="PRO_1000074070" description="Holliday junction branch migration complex subunit RuvB">
    <location>
        <begin position="1"/>
        <end position="337"/>
    </location>
</feature>
<feature type="region of interest" description="Large ATPase domain (RuvB-L)" evidence="1">
    <location>
        <begin position="1"/>
        <end position="182"/>
    </location>
</feature>
<feature type="region of interest" description="Small ATPAse domain (RuvB-S)" evidence="1">
    <location>
        <begin position="183"/>
        <end position="253"/>
    </location>
</feature>
<feature type="region of interest" description="Head domain (RuvB-H)" evidence="1">
    <location>
        <begin position="256"/>
        <end position="337"/>
    </location>
</feature>
<feature type="binding site" evidence="1">
    <location>
        <position position="21"/>
    </location>
    <ligand>
        <name>ATP</name>
        <dbReference type="ChEBI" id="CHEBI:30616"/>
    </ligand>
</feature>
<feature type="binding site" evidence="1">
    <location>
        <position position="22"/>
    </location>
    <ligand>
        <name>ATP</name>
        <dbReference type="ChEBI" id="CHEBI:30616"/>
    </ligand>
</feature>
<feature type="binding site" evidence="1">
    <location>
        <position position="63"/>
    </location>
    <ligand>
        <name>ATP</name>
        <dbReference type="ChEBI" id="CHEBI:30616"/>
    </ligand>
</feature>
<feature type="binding site" evidence="1">
    <location>
        <position position="66"/>
    </location>
    <ligand>
        <name>ATP</name>
        <dbReference type="ChEBI" id="CHEBI:30616"/>
    </ligand>
</feature>
<feature type="binding site" evidence="1">
    <location>
        <position position="67"/>
    </location>
    <ligand>
        <name>ATP</name>
        <dbReference type="ChEBI" id="CHEBI:30616"/>
    </ligand>
</feature>
<feature type="binding site" evidence="1">
    <location>
        <position position="67"/>
    </location>
    <ligand>
        <name>Mg(2+)</name>
        <dbReference type="ChEBI" id="CHEBI:18420"/>
    </ligand>
</feature>
<feature type="binding site" evidence="1">
    <location>
        <position position="68"/>
    </location>
    <ligand>
        <name>ATP</name>
        <dbReference type="ChEBI" id="CHEBI:30616"/>
    </ligand>
</feature>
<feature type="binding site" evidence="1">
    <location>
        <begin position="129"/>
        <end position="131"/>
    </location>
    <ligand>
        <name>ATP</name>
        <dbReference type="ChEBI" id="CHEBI:30616"/>
    </ligand>
</feature>
<feature type="binding site" evidence="1">
    <location>
        <position position="172"/>
    </location>
    <ligand>
        <name>ATP</name>
        <dbReference type="ChEBI" id="CHEBI:30616"/>
    </ligand>
</feature>
<feature type="binding site" evidence="1">
    <location>
        <position position="182"/>
    </location>
    <ligand>
        <name>ATP</name>
        <dbReference type="ChEBI" id="CHEBI:30616"/>
    </ligand>
</feature>
<feature type="binding site" evidence="1">
    <location>
        <position position="219"/>
    </location>
    <ligand>
        <name>ATP</name>
        <dbReference type="ChEBI" id="CHEBI:30616"/>
    </ligand>
</feature>
<feature type="binding site" evidence="1">
    <location>
        <position position="311"/>
    </location>
    <ligand>
        <name>DNA</name>
        <dbReference type="ChEBI" id="CHEBI:16991"/>
    </ligand>
</feature>
<feature type="binding site" evidence="1">
    <location>
        <position position="316"/>
    </location>
    <ligand>
        <name>DNA</name>
        <dbReference type="ChEBI" id="CHEBI:16991"/>
    </ligand>
</feature>
<name>RUVB_ACHLI</name>
<dbReference type="EC" id="3.6.4.-" evidence="1"/>
<dbReference type="EMBL" id="CP000896">
    <property type="protein sequence ID" value="ABX80992.1"/>
    <property type="molecule type" value="Genomic_DNA"/>
</dbReference>
<dbReference type="RefSeq" id="WP_012242323.1">
    <property type="nucleotide sequence ID" value="NC_010163.1"/>
</dbReference>
<dbReference type="SMR" id="A9NF62"/>
<dbReference type="STRING" id="441768.ACL_0370"/>
<dbReference type="GeneID" id="41338552"/>
<dbReference type="KEGG" id="acl:ACL_0370"/>
<dbReference type="eggNOG" id="COG2255">
    <property type="taxonomic scope" value="Bacteria"/>
</dbReference>
<dbReference type="HOGENOM" id="CLU_055599_1_0_14"/>
<dbReference type="OrthoDB" id="9804478at2"/>
<dbReference type="Proteomes" id="UP000008558">
    <property type="component" value="Chromosome"/>
</dbReference>
<dbReference type="GO" id="GO:0005737">
    <property type="term" value="C:cytoplasm"/>
    <property type="evidence" value="ECO:0007669"/>
    <property type="project" value="UniProtKB-SubCell"/>
</dbReference>
<dbReference type="GO" id="GO:0048476">
    <property type="term" value="C:Holliday junction resolvase complex"/>
    <property type="evidence" value="ECO:0007669"/>
    <property type="project" value="UniProtKB-UniRule"/>
</dbReference>
<dbReference type="GO" id="GO:0005524">
    <property type="term" value="F:ATP binding"/>
    <property type="evidence" value="ECO:0007669"/>
    <property type="project" value="UniProtKB-UniRule"/>
</dbReference>
<dbReference type="GO" id="GO:0016887">
    <property type="term" value="F:ATP hydrolysis activity"/>
    <property type="evidence" value="ECO:0007669"/>
    <property type="project" value="InterPro"/>
</dbReference>
<dbReference type="GO" id="GO:0000400">
    <property type="term" value="F:four-way junction DNA binding"/>
    <property type="evidence" value="ECO:0007669"/>
    <property type="project" value="UniProtKB-UniRule"/>
</dbReference>
<dbReference type="GO" id="GO:0009378">
    <property type="term" value="F:four-way junction helicase activity"/>
    <property type="evidence" value="ECO:0007669"/>
    <property type="project" value="InterPro"/>
</dbReference>
<dbReference type="GO" id="GO:0006310">
    <property type="term" value="P:DNA recombination"/>
    <property type="evidence" value="ECO:0007669"/>
    <property type="project" value="UniProtKB-UniRule"/>
</dbReference>
<dbReference type="GO" id="GO:0006281">
    <property type="term" value="P:DNA repair"/>
    <property type="evidence" value="ECO:0007669"/>
    <property type="project" value="UniProtKB-UniRule"/>
</dbReference>
<dbReference type="CDD" id="cd00009">
    <property type="entry name" value="AAA"/>
    <property type="match status" value="1"/>
</dbReference>
<dbReference type="Gene3D" id="1.10.8.60">
    <property type="match status" value="1"/>
</dbReference>
<dbReference type="Gene3D" id="3.40.50.300">
    <property type="entry name" value="P-loop containing nucleotide triphosphate hydrolases"/>
    <property type="match status" value="1"/>
</dbReference>
<dbReference type="Gene3D" id="1.10.10.10">
    <property type="entry name" value="Winged helix-like DNA-binding domain superfamily/Winged helix DNA-binding domain"/>
    <property type="match status" value="1"/>
</dbReference>
<dbReference type="HAMAP" id="MF_00016">
    <property type="entry name" value="DNA_HJ_migration_RuvB"/>
    <property type="match status" value="1"/>
</dbReference>
<dbReference type="InterPro" id="IPR003593">
    <property type="entry name" value="AAA+_ATPase"/>
</dbReference>
<dbReference type="InterPro" id="IPR041445">
    <property type="entry name" value="AAA_lid_4"/>
</dbReference>
<dbReference type="InterPro" id="IPR004605">
    <property type="entry name" value="DNA_helicase_Holl-junc_RuvB"/>
</dbReference>
<dbReference type="InterPro" id="IPR027417">
    <property type="entry name" value="P-loop_NTPase"/>
</dbReference>
<dbReference type="InterPro" id="IPR008824">
    <property type="entry name" value="RuvB-like_N"/>
</dbReference>
<dbReference type="InterPro" id="IPR008823">
    <property type="entry name" value="RuvB_C"/>
</dbReference>
<dbReference type="InterPro" id="IPR036388">
    <property type="entry name" value="WH-like_DNA-bd_sf"/>
</dbReference>
<dbReference type="InterPro" id="IPR036390">
    <property type="entry name" value="WH_DNA-bd_sf"/>
</dbReference>
<dbReference type="NCBIfam" id="NF000868">
    <property type="entry name" value="PRK00080.1"/>
    <property type="match status" value="1"/>
</dbReference>
<dbReference type="NCBIfam" id="TIGR00635">
    <property type="entry name" value="ruvB"/>
    <property type="match status" value="1"/>
</dbReference>
<dbReference type="PANTHER" id="PTHR42848">
    <property type="match status" value="1"/>
</dbReference>
<dbReference type="PANTHER" id="PTHR42848:SF1">
    <property type="entry name" value="HOLLIDAY JUNCTION BRANCH MIGRATION COMPLEX SUBUNIT RUVB"/>
    <property type="match status" value="1"/>
</dbReference>
<dbReference type="Pfam" id="PF17864">
    <property type="entry name" value="AAA_lid_4"/>
    <property type="match status" value="1"/>
</dbReference>
<dbReference type="Pfam" id="PF05491">
    <property type="entry name" value="RuvB_C"/>
    <property type="match status" value="1"/>
</dbReference>
<dbReference type="Pfam" id="PF05496">
    <property type="entry name" value="RuvB_N"/>
    <property type="match status" value="1"/>
</dbReference>
<dbReference type="SMART" id="SM00382">
    <property type="entry name" value="AAA"/>
    <property type="match status" value="1"/>
</dbReference>
<dbReference type="SUPFAM" id="SSF52540">
    <property type="entry name" value="P-loop containing nucleoside triphosphate hydrolases"/>
    <property type="match status" value="1"/>
</dbReference>
<dbReference type="SUPFAM" id="SSF46785">
    <property type="entry name" value="Winged helix' DNA-binding domain"/>
    <property type="match status" value="1"/>
</dbReference>
<reference key="1">
    <citation type="journal article" date="2011" name="J. Bacteriol.">
        <title>Complete genome and proteome of Acholeplasma laidlawii.</title>
        <authorList>
            <person name="Lazarev V.N."/>
            <person name="Levitskii S.A."/>
            <person name="Basovskii Y.I."/>
            <person name="Chukin M.M."/>
            <person name="Akopian T.A."/>
            <person name="Vereshchagin V.V."/>
            <person name="Kostrjukova E.S."/>
            <person name="Kovaleva G.Y."/>
            <person name="Kazanov M.D."/>
            <person name="Malko D.B."/>
            <person name="Vitreschak A.G."/>
            <person name="Sernova N.V."/>
            <person name="Gelfand M.S."/>
            <person name="Demina I.A."/>
            <person name="Serebryakova M.V."/>
            <person name="Galyamina M.A."/>
            <person name="Vtyurin N.N."/>
            <person name="Rogov S.I."/>
            <person name="Alexeev D.G."/>
            <person name="Ladygina V.G."/>
            <person name="Govorun V.M."/>
        </authorList>
    </citation>
    <scope>NUCLEOTIDE SEQUENCE [LARGE SCALE GENOMIC DNA]</scope>
    <source>
        <strain>PG-8A</strain>
    </source>
</reference>
<comment type="function">
    <text evidence="1">The RuvA-RuvB-RuvC complex processes Holliday junction (HJ) DNA during genetic recombination and DNA repair, while the RuvA-RuvB complex plays an important role in the rescue of blocked DNA replication forks via replication fork reversal (RFR). RuvA specifically binds to HJ cruciform DNA, conferring on it an open structure. The RuvB hexamer acts as an ATP-dependent pump, pulling dsDNA into and through the RuvAB complex. RuvB forms 2 homohexamers on either side of HJ DNA bound by 1 or 2 RuvA tetramers; 4 subunits per hexamer contact DNA at a time. Coordinated motions by a converter formed by DNA-disengaged RuvB subunits stimulates ATP hydrolysis and nucleotide exchange. Immobilization of the converter enables RuvB to convert the ATP-contained energy into a lever motion, pulling 2 nucleotides of DNA out of the RuvA tetramer per ATP hydrolyzed, thus driving DNA branch migration. The RuvB motors rotate together with the DNA substrate, which together with the progressing nucleotide cycle form the mechanistic basis for DNA recombination by continuous HJ branch migration. Branch migration allows RuvC to scan DNA until it finds its consensus sequence, where it cleaves and resolves cruciform DNA.</text>
</comment>
<comment type="catalytic activity">
    <reaction evidence="1">
        <text>ATP + H2O = ADP + phosphate + H(+)</text>
        <dbReference type="Rhea" id="RHEA:13065"/>
        <dbReference type="ChEBI" id="CHEBI:15377"/>
        <dbReference type="ChEBI" id="CHEBI:15378"/>
        <dbReference type="ChEBI" id="CHEBI:30616"/>
        <dbReference type="ChEBI" id="CHEBI:43474"/>
        <dbReference type="ChEBI" id="CHEBI:456216"/>
    </reaction>
</comment>
<comment type="subunit">
    <text evidence="1">Homohexamer. Forms an RuvA(8)-RuvB(12)-Holliday junction (HJ) complex. HJ DNA is sandwiched between 2 RuvA tetramers; dsDNA enters through RuvA and exits via RuvB. An RuvB hexamer assembles on each DNA strand where it exits the tetramer. Each RuvB hexamer is contacted by two RuvA subunits (via domain III) on 2 adjacent RuvB subunits; this complex drives branch migration. In the full resolvosome a probable DNA-RuvA(4)-RuvB(12)-RuvC(2) complex forms which resolves the HJ.</text>
</comment>
<comment type="subcellular location">
    <subcellularLocation>
        <location evidence="1">Cytoplasm</location>
    </subcellularLocation>
</comment>
<comment type="domain">
    <text evidence="1">Has 3 domains, the large (RuvB-L) and small ATPase (RuvB-S) domains and the C-terminal head (RuvB-H) domain. The head domain binds DNA, while the ATPase domains jointly bind ATP, ADP or are empty depending on the state of the subunit in the translocation cycle. During a single DNA translocation step the structure of each domain remains the same, but their relative positions change.</text>
</comment>
<comment type="similarity">
    <text evidence="1">Belongs to the RuvB family.</text>
</comment>
<protein>
    <recommendedName>
        <fullName evidence="1">Holliday junction branch migration complex subunit RuvB</fullName>
        <ecNumber evidence="1">3.6.4.-</ecNumber>
    </recommendedName>
</protein>
<sequence>MSEEKSVLRDLNLKNDDELMLRPQTLNQYIGQDDIKEMLSIYIQAALKREESLDHVLLYGAPGLGKTTLAQIIANELGVDIKITSGPAIEKTGDLVALLSSLSPGDVLFIDEIHRIPRFVEEVLYSAMEDYTLDIVLDKERDSRSIRIELPPFTLIGATTRFGDLSHPLRERFGAVFRLSYYKLEEIKQIVRRTSKVYQNEIDEKAVDELSKRSRGTPRIANRLFRRVRDFAEIMTDAVITLDITQLALTKLGIDHKGLDASDYLYLRGIVERFNGGPVGLESLASTIGEEPGTIEDVYEPYLLQEGYIKRTPRGRVATELAYNLLGVKYYKGLLDN</sequence>
<keyword id="KW-0067">ATP-binding</keyword>
<keyword id="KW-0963">Cytoplasm</keyword>
<keyword id="KW-0227">DNA damage</keyword>
<keyword id="KW-0233">DNA recombination</keyword>
<keyword id="KW-0234">DNA repair</keyword>
<keyword id="KW-0238">DNA-binding</keyword>
<keyword id="KW-0378">Hydrolase</keyword>
<keyword id="KW-0547">Nucleotide-binding</keyword>
<keyword id="KW-1185">Reference proteome</keyword>
<evidence type="ECO:0000255" key="1">
    <source>
        <dbReference type="HAMAP-Rule" id="MF_00016"/>
    </source>
</evidence>